<protein>
    <recommendedName>
        <fullName evidence="2">Ribosome biogenesis protein ERB1</fullName>
    </recommendedName>
    <alternativeName>
        <fullName evidence="2">Eukaryotic ribosome biogenesis protein 1</fullName>
    </alternativeName>
</protein>
<proteinExistence type="inferred from homology"/>
<reference key="1">
    <citation type="journal article" date="2004" name="Nature">
        <title>Genome evolution in yeasts.</title>
        <authorList>
            <person name="Dujon B."/>
            <person name="Sherman D."/>
            <person name="Fischer G."/>
            <person name="Durrens P."/>
            <person name="Casaregola S."/>
            <person name="Lafontaine I."/>
            <person name="de Montigny J."/>
            <person name="Marck C."/>
            <person name="Neuveglise C."/>
            <person name="Talla E."/>
            <person name="Goffard N."/>
            <person name="Frangeul L."/>
            <person name="Aigle M."/>
            <person name="Anthouard V."/>
            <person name="Babour A."/>
            <person name="Barbe V."/>
            <person name="Barnay S."/>
            <person name="Blanchin S."/>
            <person name="Beckerich J.-M."/>
            <person name="Beyne E."/>
            <person name="Bleykasten C."/>
            <person name="Boisrame A."/>
            <person name="Boyer J."/>
            <person name="Cattolico L."/>
            <person name="Confanioleri F."/>
            <person name="de Daruvar A."/>
            <person name="Despons L."/>
            <person name="Fabre E."/>
            <person name="Fairhead C."/>
            <person name="Ferry-Dumazet H."/>
            <person name="Groppi A."/>
            <person name="Hantraye F."/>
            <person name="Hennequin C."/>
            <person name="Jauniaux N."/>
            <person name="Joyet P."/>
            <person name="Kachouri R."/>
            <person name="Kerrest A."/>
            <person name="Koszul R."/>
            <person name="Lemaire M."/>
            <person name="Lesur I."/>
            <person name="Ma L."/>
            <person name="Muller H."/>
            <person name="Nicaud J.-M."/>
            <person name="Nikolski M."/>
            <person name="Oztas S."/>
            <person name="Ozier-Kalogeropoulos O."/>
            <person name="Pellenz S."/>
            <person name="Potier S."/>
            <person name="Richard G.-F."/>
            <person name="Straub M.-L."/>
            <person name="Suleau A."/>
            <person name="Swennen D."/>
            <person name="Tekaia F."/>
            <person name="Wesolowski-Louvel M."/>
            <person name="Westhof E."/>
            <person name="Wirth B."/>
            <person name="Zeniou-Meyer M."/>
            <person name="Zivanovic Y."/>
            <person name="Bolotin-Fukuhara M."/>
            <person name="Thierry A."/>
            <person name="Bouchier C."/>
            <person name="Caudron B."/>
            <person name="Scarpelli C."/>
            <person name="Gaillardin C."/>
            <person name="Weissenbach J."/>
            <person name="Wincker P."/>
            <person name="Souciet J.-L."/>
        </authorList>
    </citation>
    <scope>NUCLEOTIDE SEQUENCE [LARGE SCALE GENOMIC DNA]</scope>
    <source>
        <strain>CLIB 122 / E 150</strain>
    </source>
</reference>
<dbReference type="EMBL" id="CR382131">
    <property type="protein sequence ID" value="CAG80024.1"/>
    <property type="molecule type" value="Genomic_DNA"/>
</dbReference>
<dbReference type="RefSeq" id="XP_504423.1">
    <property type="nucleotide sequence ID" value="XM_504423.1"/>
</dbReference>
<dbReference type="SMR" id="Q6C4I9"/>
<dbReference type="FunCoup" id="Q6C4I9">
    <property type="interactions" value="1078"/>
</dbReference>
<dbReference type="STRING" id="284591.Q6C4I9"/>
<dbReference type="EnsemblFungi" id="CAG80024">
    <property type="protein sequence ID" value="CAG80024"/>
    <property type="gene ID" value="YALI0_E26389g"/>
</dbReference>
<dbReference type="KEGG" id="yli:2912374"/>
<dbReference type="VEuPathDB" id="FungiDB:YALI0_E26389g"/>
<dbReference type="HOGENOM" id="CLU_011390_0_1_1"/>
<dbReference type="InParanoid" id="Q6C4I9"/>
<dbReference type="OMA" id="MRPAKGE"/>
<dbReference type="OrthoDB" id="112314at4891"/>
<dbReference type="Proteomes" id="UP000001300">
    <property type="component" value="Chromosome E"/>
</dbReference>
<dbReference type="GO" id="GO:0005654">
    <property type="term" value="C:nucleoplasm"/>
    <property type="evidence" value="ECO:0007669"/>
    <property type="project" value="UniProtKB-SubCell"/>
</dbReference>
<dbReference type="GO" id="GO:0070545">
    <property type="term" value="C:PeBoW complex"/>
    <property type="evidence" value="ECO:0000318"/>
    <property type="project" value="GO_Central"/>
</dbReference>
<dbReference type="GO" id="GO:0030687">
    <property type="term" value="C:preribosome, large subunit precursor"/>
    <property type="evidence" value="ECO:0000318"/>
    <property type="project" value="GO_Central"/>
</dbReference>
<dbReference type="GO" id="GO:0043021">
    <property type="term" value="F:ribonucleoprotein complex binding"/>
    <property type="evidence" value="ECO:0000318"/>
    <property type="project" value="GO_Central"/>
</dbReference>
<dbReference type="GO" id="GO:0000466">
    <property type="term" value="P:maturation of 5.8S rRNA from tricistronic rRNA transcript (SSU-rRNA, 5.8S rRNA, LSU-rRNA)"/>
    <property type="evidence" value="ECO:0007669"/>
    <property type="project" value="UniProtKB-UniRule"/>
</dbReference>
<dbReference type="GO" id="GO:0000463">
    <property type="term" value="P:maturation of LSU-rRNA from tricistronic rRNA transcript (SSU-rRNA, 5.8S rRNA, LSU-rRNA)"/>
    <property type="evidence" value="ECO:0000318"/>
    <property type="project" value="GO_Central"/>
</dbReference>
<dbReference type="FunFam" id="2.130.10.10:FF:000061">
    <property type="entry name" value="Ribosome biogenesis protein BOP1 homolog"/>
    <property type="match status" value="1"/>
</dbReference>
<dbReference type="Gene3D" id="2.130.10.10">
    <property type="entry name" value="YVTN repeat-like/Quinoprotein amine dehydrogenase"/>
    <property type="match status" value="1"/>
</dbReference>
<dbReference type="HAMAP" id="MF_03027">
    <property type="entry name" value="BOP1"/>
    <property type="match status" value="1"/>
</dbReference>
<dbReference type="InterPro" id="IPR028598">
    <property type="entry name" value="BOP1/Erb1"/>
</dbReference>
<dbReference type="InterPro" id="IPR012953">
    <property type="entry name" value="BOP1_N_dom"/>
</dbReference>
<dbReference type="InterPro" id="IPR015943">
    <property type="entry name" value="WD40/YVTN_repeat-like_dom_sf"/>
</dbReference>
<dbReference type="InterPro" id="IPR019775">
    <property type="entry name" value="WD40_repeat_CS"/>
</dbReference>
<dbReference type="InterPro" id="IPR036322">
    <property type="entry name" value="WD40_repeat_dom_sf"/>
</dbReference>
<dbReference type="InterPro" id="IPR001680">
    <property type="entry name" value="WD40_rpt"/>
</dbReference>
<dbReference type="PANTHER" id="PTHR17605:SF0">
    <property type="entry name" value="RIBOSOME BIOGENESIS PROTEIN BOP1"/>
    <property type="match status" value="1"/>
</dbReference>
<dbReference type="PANTHER" id="PTHR17605">
    <property type="entry name" value="RIBOSOME BIOGENESIS PROTEIN BOP1 BLOCK OF PROLIFERATION 1 PROTEIN"/>
    <property type="match status" value="1"/>
</dbReference>
<dbReference type="Pfam" id="PF08145">
    <property type="entry name" value="BOP1NT"/>
    <property type="match status" value="1"/>
</dbReference>
<dbReference type="Pfam" id="PF00400">
    <property type="entry name" value="WD40"/>
    <property type="match status" value="3"/>
</dbReference>
<dbReference type="SMART" id="SM01035">
    <property type="entry name" value="BOP1NT"/>
    <property type="match status" value="1"/>
</dbReference>
<dbReference type="SMART" id="SM00320">
    <property type="entry name" value="WD40"/>
    <property type="match status" value="6"/>
</dbReference>
<dbReference type="SUPFAM" id="SSF50978">
    <property type="entry name" value="WD40 repeat-like"/>
    <property type="match status" value="1"/>
</dbReference>
<dbReference type="PROSITE" id="PS00678">
    <property type="entry name" value="WD_REPEATS_1"/>
    <property type="match status" value="1"/>
</dbReference>
<dbReference type="PROSITE" id="PS50082">
    <property type="entry name" value="WD_REPEATS_2"/>
    <property type="match status" value="2"/>
</dbReference>
<dbReference type="PROSITE" id="PS50294">
    <property type="entry name" value="WD_REPEATS_REGION"/>
    <property type="match status" value="1"/>
</dbReference>
<evidence type="ECO:0000250" key="1"/>
<evidence type="ECO:0000255" key="2">
    <source>
        <dbReference type="HAMAP-Rule" id="MF_03027"/>
    </source>
</evidence>
<evidence type="ECO:0000256" key="3">
    <source>
        <dbReference type="SAM" id="MobiDB-lite"/>
    </source>
</evidence>
<accession>Q6C4I9</accession>
<gene>
    <name evidence="2" type="primary">ERB1</name>
    <name type="ordered locus">YALI0E26389g</name>
</gene>
<organism>
    <name type="scientific">Yarrowia lipolytica (strain CLIB 122 / E 150)</name>
    <name type="common">Yeast</name>
    <name type="synonym">Candida lipolytica</name>
    <dbReference type="NCBI Taxonomy" id="284591"/>
    <lineage>
        <taxon>Eukaryota</taxon>
        <taxon>Fungi</taxon>
        <taxon>Dikarya</taxon>
        <taxon>Ascomycota</taxon>
        <taxon>Saccharomycotina</taxon>
        <taxon>Dipodascomycetes</taxon>
        <taxon>Dipodascales</taxon>
        <taxon>Dipodascales incertae sedis</taxon>
        <taxon>Yarrowia</taxon>
    </lineage>
</organism>
<comment type="function">
    <text evidence="2">Component of the NOP7 complex, which is required for maturation of the 25S and 5.8S ribosomal RNAs and formation of the 60S ribosome.</text>
</comment>
<comment type="subunit">
    <text evidence="2">Component of the NOP7 complex, composed of ERB1, NOP7 and YTM1. The complex is held together by ERB1, which interacts with NOP7 via its N-terminal domain and with YTM1 via a high-affinity interaction between the seven-bladed beta-propeller domains of the 2 proteins. The NOP7 complex associates with the 66S pre-ribosome.</text>
</comment>
<comment type="subcellular location">
    <subcellularLocation>
        <location evidence="2">Nucleus</location>
        <location evidence="2">Nucleolus</location>
    </subcellularLocation>
    <subcellularLocation>
        <location evidence="2">Nucleus</location>
        <location evidence="2">Nucleoplasm</location>
    </subcellularLocation>
</comment>
<comment type="similarity">
    <text evidence="2">Belongs to the WD repeat BOP1/ERB1 family.</text>
</comment>
<sequence>MVRSRSNSVKKDLKRKVDEPVDVQDEFDVEGLIDEGDSDDEDEAEQEVAQENVTKDKKNTSKTENEEDADDESDSDAELEALIGEEEDLSGSELEDELAYFSDAGDDEVDPSILKHLDDGVRLRSLSRSSDQTDELKDVVEIVPGADGKPRMIKKEIHAVYDSDDSDQEESNTIGNVPLSAYDQMPHIGYDINGKRIMRPATGSALDNLLETIDLPEGWTGLLDKSTGKGLNISKEELELIKRIQKNETTDDASNPYEDLVEWFSSKTEIMPLSAAPEPKRRFIPSKHEAKRVMKMVQAIRQGKLLTKPKEDPDARPNYDVWADNLTDVQDHVMTLRAPKMPPPTHDESYNPPAEYLPTEEEIAEWNALAPSERERNYVPKKYTALRHVPGYSESVRERFERSLDLYLAPRVRKNKLNIDPDSLIPDLPSPKDLMPFPIRCATTYKGHKGKVRAISVDPSGEFLATGGDDGTLRVWEVLTGRELYRCRLVASIDAQDDSVECVQWNPAVPGMLAASAGEHIFLIVPPTLFDFDIENTGREKIEQGWGFAEGGREQQDIDTKGLDDDADSDSDDETGHVKKKSPPAKWITPTAKQQASGIGAIITATKTIKRLAWHRKGDYLVTVAPSAQHRAVAIHQISKHSSQSPFNKSKGIVQDAMFHPFRPHLYVATQRYVRIYDLAKQVMAKKLMPGARWVSSLDIHPRGDNVILSSFDKRLLWHDLDLSDKPYKTLRYHEKAVRHAAFHKGGLPLFCSASDDGNINIFHGTVYDDMMTNPLLVPLKVLKGHDVKSGLGILRVEWHPREAWLFSAAADGTAKLWTT</sequence>
<name>ERB1_YARLI</name>
<feature type="chain" id="PRO_0000370443" description="Ribosome biogenesis protein ERB1">
    <location>
        <begin position="1"/>
        <end position="820"/>
    </location>
</feature>
<feature type="repeat" description="WD 1">
    <location>
        <begin position="447"/>
        <end position="486"/>
    </location>
</feature>
<feature type="repeat" description="WD 2">
    <location>
        <begin position="495"/>
        <end position="535"/>
    </location>
</feature>
<feature type="repeat" description="WD 3">
    <location>
        <begin position="604"/>
        <end position="646"/>
    </location>
</feature>
<feature type="repeat" description="WD 4">
    <location>
        <begin position="649"/>
        <end position="687"/>
    </location>
</feature>
<feature type="repeat" description="WD 5">
    <location>
        <begin position="690"/>
        <end position="729"/>
    </location>
</feature>
<feature type="repeat" description="WD 6">
    <location>
        <begin position="733"/>
        <end position="773"/>
    </location>
</feature>
<feature type="repeat" description="WD 7">
    <location>
        <begin position="789"/>
        <end position="820"/>
    </location>
</feature>
<feature type="region of interest" description="Disordered" evidence="3">
    <location>
        <begin position="1"/>
        <end position="111"/>
    </location>
</feature>
<feature type="region of interest" description="Required for interaction with NOP7" evidence="1">
    <location>
        <begin position="282"/>
        <end position="395"/>
    </location>
</feature>
<feature type="region of interest" description="Required for interaction with YTM1" evidence="1">
    <location>
        <begin position="395"/>
        <end position="431"/>
    </location>
</feature>
<feature type="region of interest" description="Disordered" evidence="3">
    <location>
        <begin position="545"/>
        <end position="585"/>
    </location>
</feature>
<feature type="compositionally biased region" description="Basic and acidic residues" evidence="3">
    <location>
        <begin position="9"/>
        <end position="19"/>
    </location>
</feature>
<feature type="compositionally biased region" description="Acidic residues" evidence="3">
    <location>
        <begin position="20"/>
        <end position="48"/>
    </location>
</feature>
<feature type="compositionally biased region" description="Basic and acidic residues" evidence="3">
    <location>
        <begin position="53"/>
        <end position="64"/>
    </location>
</feature>
<feature type="compositionally biased region" description="Acidic residues" evidence="3">
    <location>
        <begin position="65"/>
        <end position="110"/>
    </location>
</feature>
<feature type="compositionally biased region" description="Basic and acidic residues" evidence="3">
    <location>
        <begin position="551"/>
        <end position="564"/>
    </location>
</feature>
<keyword id="KW-0539">Nucleus</keyword>
<keyword id="KW-1185">Reference proteome</keyword>
<keyword id="KW-0677">Repeat</keyword>
<keyword id="KW-0690">Ribosome biogenesis</keyword>
<keyword id="KW-0698">rRNA processing</keyword>
<keyword id="KW-0853">WD repeat</keyword>